<protein>
    <recommendedName>
        <fullName evidence="1">Small ribosomal subunit protein uS5</fullName>
    </recommendedName>
    <alternativeName>
        <fullName evidence="2">30S ribosomal protein S5</fullName>
    </alternativeName>
</protein>
<sequence length="186" mass="20210">MARKENRDRDREERDSEFVDKLVHINRVAKVVKGGRRFGFAALVVVGDQKGRVGFGHGKAREVPEAIRKATEAAKRAMIRVPLREGRTLHHDVDGRHGAGRVVLRAAPPGTGIIAGGPMRAVFETLGVQDVVAKSLGSSNPYNMVRATFDALKNEQSPRMVAARRGKKVSEIVGRRSDAAAEAGLE</sequence>
<accession>A7HWS8</accession>
<feature type="chain" id="PRO_1000086035" description="Small ribosomal subunit protein uS5">
    <location>
        <begin position="1"/>
        <end position="186"/>
    </location>
</feature>
<feature type="domain" description="S5 DRBM" evidence="1">
    <location>
        <begin position="18"/>
        <end position="81"/>
    </location>
</feature>
<proteinExistence type="inferred from homology"/>
<organism>
    <name type="scientific">Parvibaculum lavamentivorans (strain DS-1 / DSM 13023 / NCIMB 13966)</name>
    <dbReference type="NCBI Taxonomy" id="402881"/>
    <lineage>
        <taxon>Bacteria</taxon>
        <taxon>Pseudomonadati</taxon>
        <taxon>Pseudomonadota</taxon>
        <taxon>Alphaproteobacteria</taxon>
        <taxon>Hyphomicrobiales</taxon>
        <taxon>Parvibaculaceae</taxon>
        <taxon>Parvibaculum</taxon>
    </lineage>
</organism>
<comment type="function">
    <text evidence="1">With S4 and S12 plays an important role in translational accuracy.</text>
</comment>
<comment type="function">
    <text evidence="1">Located at the back of the 30S subunit body where it stabilizes the conformation of the head with respect to the body.</text>
</comment>
<comment type="subunit">
    <text evidence="1">Part of the 30S ribosomal subunit. Contacts proteins S4 and S8.</text>
</comment>
<comment type="domain">
    <text>The N-terminal domain interacts with the head of the 30S subunit; the C-terminal domain interacts with the body and contacts protein S4. The interaction surface between S4 and S5 is involved in control of translational fidelity.</text>
</comment>
<comment type="similarity">
    <text evidence="1">Belongs to the universal ribosomal protein uS5 family.</text>
</comment>
<evidence type="ECO:0000255" key="1">
    <source>
        <dbReference type="HAMAP-Rule" id="MF_01307"/>
    </source>
</evidence>
<evidence type="ECO:0000305" key="2"/>
<gene>
    <name evidence="1" type="primary">rpsE</name>
    <name type="ordered locus">Plav_2753</name>
</gene>
<keyword id="KW-1185">Reference proteome</keyword>
<keyword id="KW-0687">Ribonucleoprotein</keyword>
<keyword id="KW-0689">Ribosomal protein</keyword>
<keyword id="KW-0694">RNA-binding</keyword>
<keyword id="KW-0699">rRNA-binding</keyword>
<dbReference type="EMBL" id="CP000774">
    <property type="protein sequence ID" value="ABS64361.1"/>
    <property type="molecule type" value="Genomic_DNA"/>
</dbReference>
<dbReference type="RefSeq" id="WP_012111675.1">
    <property type="nucleotide sequence ID" value="NC_009719.1"/>
</dbReference>
<dbReference type="SMR" id="A7HWS8"/>
<dbReference type="STRING" id="402881.Plav_2753"/>
<dbReference type="KEGG" id="pla:Plav_2753"/>
<dbReference type="eggNOG" id="COG0098">
    <property type="taxonomic scope" value="Bacteria"/>
</dbReference>
<dbReference type="HOGENOM" id="CLU_065898_2_2_5"/>
<dbReference type="OrthoDB" id="9809045at2"/>
<dbReference type="Proteomes" id="UP000006377">
    <property type="component" value="Chromosome"/>
</dbReference>
<dbReference type="GO" id="GO:0015935">
    <property type="term" value="C:small ribosomal subunit"/>
    <property type="evidence" value="ECO:0007669"/>
    <property type="project" value="InterPro"/>
</dbReference>
<dbReference type="GO" id="GO:0019843">
    <property type="term" value="F:rRNA binding"/>
    <property type="evidence" value="ECO:0007669"/>
    <property type="project" value="UniProtKB-UniRule"/>
</dbReference>
<dbReference type="GO" id="GO:0003735">
    <property type="term" value="F:structural constituent of ribosome"/>
    <property type="evidence" value="ECO:0007669"/>
    <property type="project" value="InterPro"/>
</dbReference>
<dbReference type="GO" id="GO:0006412">
    <property type="term" value="P:translation"/>
    <property type="evidence" value="ECO:0007669"/>
    <property type="project" value="UniProtKB-UniRule"/>
</dbReference>
<dbReference type="FunFam" id="3.30.160.20:FF:000001">
    <property type="entry name" value="30S ribosomal protein S5"/>
    <property type="match status" value="1"/>
</dbReference>
<dbReference type="FunFam" id="3.30.230.10:FF:000002">
    <property type="entry name" value="30S ribosomal protein S5"/>
    <property type="match status" value="1"/>
</dbReference>
<dbReference type="Gene3D" id="3.30.160.20">
    <property type="match status" value="1"/>
</dbReference>
<dbReference type="Gene3D" id="3.30.230.10">
    <property type="match status" value="1"/>
</dbReference>
<dbReference type="HAMAP" id="MF_01307_B">
    <property type="entry name" value="Ribosomal_uS5_B"/>
    <property type="match status" value="1"/>
</dbReference>
<dbReference type="InterPro" id="IPR020568">
    <property type="entry name" value="Ribosomal_Su5_D2-typ_SF"/>
</dbReference>
<dbReference type="InterPro" id="IPR000851">
    <property type="entry name" value="Ribosomal_uS5"/>
</dbReference>
<dbReference type="InterPro" id="IPR005712">
    <property type="entry name" value="Ribosomal_uS5_bac-type"/>
</dbReference>
<dbReference type="InterPro" id="IPR005324">
    <property type="entry name" value="Ribosomal_uS5_C"/>
</dbReference>
<dbReference type="InterPro" id="IPR013810">
    <property type="entry name" value="Ribosomal_uS5_N"/>
</dbReference>
<dbReference type="InterPro" id="IPR018192">
    <property type="entry name" value="Ribosomal_uS5_N_CS"/>
</dbReference>
<dbReference type="InterPro" id="IPR014721">
    <property type="entry name" value="Ribsml_uS5_D2-typ_fold_subgr"/>
</dbReference>
<dbReference type="NCBIfam" id="TIGR01021">
    <property type="entry name" value="rpsE_bact"/>
    <property type="match status" value="1"/>
</dbReference>
<dbReference type="PANTHER" id="PTHR48277">
    <property type="entry name" value="MITOCHONDRIAL RIBOSOMAL PROTEIN S5"/>
    <property type="match status" value="1"/>
</dbReference>
<dbReference type="PANTHER" id="PTHR48277:SF1">
    <property type="entry name" value="MITOCHONDRIAL RIBOSOMAL PROTEIN S5"/>
    <property type="match status" value="1"/>
</dbReference>
<dbReference type="Pfam" id="PF00333">
    <property type="entry name" value="Ribosomal_S5"/>
    <property type="match status" value="1"/>
</dbReference>
<dbReference type="Pfam" id="PF03719">
    <property type="entry name" value="Ribosomal_S5_C"/>
    <property type="match status" value="1"/>
</dbReference>
<dbReference type="SUPFAM" id="SSF54768">
    <property type="entry name" value="dsRNA-binding domain-like"/>
    <property type="match status" value="1"/>
</dbReference>
<dbReference type="SUPFAM" id="SSF54211">
    <property type="entry name" value="Ribosomal protein S5 domain 2-like"/>
    <property type="match status" value="1"/>
</dbReference>
<dbReference type="PROSITE" id="PS00585">
    <property type="entry name" value="RIBOSOMAL_S5"/>
    <property type="match status" value="1"/>
</dbReference>
<dbReference type="PROSITE" id="PS50881">
    <property type="entry name" value="S5_DSRBD"/>
    <property type="match status" value="1"/>
</dbReference>
<reference key="1">
    <citation type="journal article" date="2011" name="Stand. Genomic Sci.">
        <title>Complete genome sequence of Parvibaculum lavamentivorans type strain (DS-1(T)).</title>
        <authorList>
            <person name="Schleheck D."/>
            <person name="Weiss M."/>
            <person name="Pitluck S."/>
            <person name="Bruce D."/>
            <person name="Land M.L."/>
            <person name="Han S."/>
            <person name="Saunders E."/>
            <person name="Tapia R."/>
            <person name="Detter C."/>
            <person name="Brettin T."/>
            <person name="Han J."/>
            <person name="Woyke T."/>
            <person name="Goodwin L."/>
            <person name="Pennacchio L."/>
            <person name="Nolan M."/>
            <person name="Cook A.M."/>
            <person name="Kjelleberg S."/>
            <person name="Thomas T."/>
        </authorList>
    </citation>
    <scope>NUCLEOTIDE SEQUENCE [LARGE SCALE GENOMIC DNA]</scope>
    <source>
        <strain>DS-1 / DSM 13023 / NCIMB 13966</strain>
    </source>
</reference>
<name>RS5_PARL1</name>